<gene>
    <name evidence="1" type="primary">nqrB</name>
    <name type="ordered locus">NMA0751</name>
</gene>
<reference key="1">
    <citation type="journal article" date="2000" name="Nature">
        <title>Complete DNA sequence of a serogroup A strain of Neisseria meningitidis Z2491.</title>
        <authorList>
            <person name="Parkhill J."/>
            <person name="Achtman M."/>
            <person name="James K.D."/>
            <person name="Bentley S.D."/>
            <person name="Churcher C.M."/>
            <person name="Klee S.R."/>
            <person name="Morelli G."/>
            <person name="Basham D."/>
            <person name="Brown D."/>
            <person name="Chillingworth T."/>
            <person name="Davies R.M."/>
            <person name="Davis P."/>
            <person name="Devlin K."/>
            <person name="Feltwell T."/>
            <person name="Hamlin N."/>
            <person name="Holroyd S."/>
            <person name="Jagels K."/>
            <person name="Leather S."/>
            <person name="Moule S."/>
            <person name="Mungall K.L."/>
            <person name="Quail M.A."/>
            <person name="Rajandream M.A."/>
            <person name="Rutherford K.M."/>
            <person name="Simmonds M."/>
            <person name="Skelton J."/>
            <person name="Whitehead S."/>
            <person name="Spratt B.G."/>
            <person name="Barrell B.G."/>
        </authorList>
    </citation>
    <scope>NUCLEOTIDE SEQUENCE [LARGE SCALE GENOMIC DNA]</scope>
    <source>
        <strain>DSM 15465 / Z2491</strain>
    </source>
</reference>
<accession>Q9JVP9</accession>
<accession>A1IQH1</accession>
<feature type="chain" id="PRO_0000074438" description="Na(+)-translocating NADH-quinone reductase subunit B">
    <location>
        <begin position="1"/>
        <end position="410"/>
    </location>
</feature>
<feature type="transmembrane region" description="Helical" evidence="1">
    <location>
        <begin position="56"/>
        <end position="76"/>
    </location>
</feature>
<feature type="transmembrane region" description="Helical" evidence="1">
    <location>
        <begin position="119"/>
        <end position="139"/>
    </location>
</feature>
<feature type="transmembrane region" description="Helical" evidence="1">
    <location>
        <begin position="159"/>
        <end position="179"/>
    </location>
</feature>
<feature type="transmembrane region" description="Helical" evidence="1">
    <location>
        <begin position="266"/>
        <end position="286"/>
    </location>
</feature>
<feature type="transmembrane region" description="Helical" evidence="1">
    <location>
        <begin position="293"/>
        <end position="313"/>
    </location>
</feature>
<feature type="transmembrane region" description="Helical" evidence="1">
    <location>
        <begin position="318"/>
        <end position="338"/>
    </location>
</feature>
<feature type="transmembrane region" description="Helical" evidence="1">
    <location>
        <begin position="347"/>
        <end position="367"/>
    </location>
</feature>
<feature type="transmembrane region" description="Helical" evidence="1">
    <location>
        <begin position="377"/>
        <end position="397"/>
    </location>
</feature>
<feature type="modified residue" description="FMN phosphoryl threonine" evidence="1">
    <location>
        <position position="232"/>
    </location>
</feature>
<evidence type="ECO:0000255" key="1">
    <source>
        <dbReference type="HAMAP-Rule" id="MF_00426"/>
    </source>
</evidence>
<name>NQRB_NEIMA</name>
<keyword id="KW-0997">Cell inner membrane</keyword>
<keyword id="KW-1003">Cell membrane</keyword>
<keyword id="KW-0285">Flavoprotein</keyword>
<keyword id="KW-0288">FMN</keyword>
<keyword id="KW-0406">Ion transport</keyword>
<keyword id="KW-0472">Membrane</keyword>
<keyword id="KW-0520">NAD</keyword>
<keyword id="KW-0597">Phosphoprotein</keyword>
<keyword id="KW-0915">Sodium</keyword>
<keyword id="KW-0739">Sodium transport</keyword>
<keyword id="KW-1278">Translocase</keyword>
<keyword id="KW-0812">Transmembrane</keyword>
<keyword id="KW-1133">Transmembrane helix</keyword>
<keyword id="KW-0813">Transport</keyword>
<keyword id="KW-0830">Ubiquinone</keyword>
<dbReference type="EC" id="7.2.1.1" evidence="1"/>
<dbReference type="EMBL" id="AL157959">
    <property type="protein sequence ID" value="CAM08002.1"/>
    <property type="molecule type" value="Genomic_DNA"/>
</dbReference>
<dbReference type="PIR" id="H81918">
    <property type="entry name" value="H81918"/>
</dbReference>
<dbReference type="RefSeq" id="WP_002247161.1">
    <property type="nucleotide sequence ID" value="NC_003116.1"/>
</dbReference>
<dbReference type="SMR" id="Q9JVP9"/>
<dbReference type="EnsemblBacteria" id="CAM08002">
    <property type="protein sequence ID" value="CAM08002"/>
    <property type="gene ID" value="NMA0751"/>
</dbReference>
<dbReference type="KEGG" id="nma:NMA0751"/>
<dbReference type="HOGENOM" id="CLU_042020_1_1_4"/>
<dbReference type="Proteomes" id="UP000000626">
    <property type="component" value="Chromosome"/>
</dbReference>
<dbReference type="GO" id="GO:0005886">
    <property type="term" value="C:plasma membrane"/>
    <property type="evidence" value="ECO:0007669"/>
    <property type="project" value="UniProtKB-SubCell"/>
</dbReference>
<dbReference type="GO" id="GO:0010181">
    <property type="term" value="F:FMN binding"/>
    <property type="evidence" value="ECO:0007669"/>
    <property type="project" value="InterPro"/>
</dbReference>
<dbReference type="GO" id="GO:0016655">
    <property type="term" value="F:oxidoreductase activity, acting on NAD(P)H, quinone or similar compound as acceptor"/>
    <property type="evidence" value="ECO:0007669"/>
    <property type="project" value="UniProtKB-UniRule"/>
</dbReference>
<dbReference type="GO" id="GO:0022904">
    <property type="term" value="P:respiratory electron transport chain"/>
    <property type="evidence" value="ECO:0007669"/>
    <property type="project" value="InterPro"/>
</dbReference>
<dbReference type="GO" id="GO:0006814">
    <property type="term" value="P:sodium ion transport"/>
    <property type="evidence" value="ECO:0007669"/>
    <property type="project" value="UniProtKB-UniRule"/>
</dbReference>
<dbReference type="GO" id="GO:0055085">
    <property type="term" value="P:transmembrane transport"/>
    <property type="evidence" value="ECO:0007669"/>
    <property type="project" value="InterPro"/>
</dbReference>
<dbReference type="HAMAP" id="MF_00426">
    <property type="entry name" value="NqrB"/>
    <property type="match status" value="1"/>
</dbReference>
<dbReference type="InterPro" id="IPR010966">
    <property type="entry name" value="NqrB"/>
</dbReference>
<dbReference type="InterPro" id="IPR004338">
    <property type="entry name" value="NqrB/RnfD"/>
</dbReference>
<dbReference type="NCBIfam" id="TIGR01937">
    <property type="entry name" value="nqrB"/>
    <property type="match status" value="1"/>
</dbReference>
<dbReference type="NCBIfam" id="NF003756">
    <property type="entry name" value="PRK05349.1"/>
    <property type="match status" value="1"/>
</dbReference>
<dbReference type="PANTHER" id="PTHR30578">
    <property type="entry name" value="ELECTRON TRANSPORT COMPLEX PROTEIN RNFD"/>
    <property type="match status" value="1"/>
</dbReference>
<dbReference type="PANTHER" id="PTHR30578:SF1">
    <property type="entry name" value="NA(+)-TRANSLOCATING NADH-QUINONE REDUCTASE SUBUNIT B"/>
    <property type="match status" value="1"/>
</dbReference>
<dbReference type="Pfam" id="PF03116">
    <property type="entry name" value="NQR2_RnfD_RnfE"/>
    <property type="match status" value="1"/>
</dbReference>
<dbReference type="PIRSF" id="PIRSF016055">
    <property type="entry name" value="NADH-UbQ_OxRdtase_B_su"/>
    <property type="match status" value="1"/>
</dbReference>
<comment type="function">
    <text evidence="1">NQR complex catalyzes the reduction of ubiquinone-1 to ubiquinol by two successive reactions, coupled with the transport of Na(+) ions from the cytoplasm to the periplasm. NqrA to NqrE are probably involved in the second step, the conversion of ubisemiquinone to ubiquinol.</text>
</comment>
<comment type="catalytic activity">
    <reaction evidence="1">
        <text>a ubiquinone + n Na(+)(in) + NADH + H(+) = a ubiquinol + n Na(+)(out) + NAD(+)</text>
        <dbReference type="Rhea" id="RHEA:47748"/>
        <dbReference type="Rhea" id="RHEA-COMP:9565"/>
        <dbReference type="Rhea" id="RHEA-COMP:9566"/>
        <dbReference type="ChEBI" id="CHEBI:15378"/>
        <dbReference type="ChEBI" id="CHEBI:16389"/>
        <dbReference type="ChEBI" id="CHEBI:17976"/>
        <dbReference type="ChEBI" id="CHEBI:29101"/>
        <dbReference type="ChEBI" id="CHEBI:57540"/>
        <dbReference type="ChEBI" id="CHEBI:57945"/>
        <dbReference type="EC" id="7.2.1.1"/>
    </reaction>
</comment>
<comment type="cofactor">
    <cofactor evidence="1">
        <name>FMN</name>
        <dbReference type="ChEBI" id="CHEBI:58210"/>
    </cofactor>
</comment>
<comment type="subunit">
    <text evidence="1">Composed of six subunits; NqrA, NqrB, NqrC, NqrD, NqrE and NqrF.</text>
</comment>
<comment type="subcellular location">
    <subcellularLocation>
        <location evidence="1">Cell inner membrane</location>
        <topology evidence="1">Multi-pass membrane protein</topology>
    </subcellularLocation>
</comment>
<comment type="similarity">
    <text evidence="1">Belongs to the NqrB/RnfD family.</text>
</comment>
<organism>
    <name type="scientific">Neisseria meningitidis serogroup A / serotype 4A (strain DSM 15465 / Z2491)</name>
    <dbReference type="NCBI Taxonomy" id="122587"/>
    <lineage>
        <taxon>Bacteria</taxon>
        <taxon>Pseudomonadati</taxon>
        <taxon>Pseudomonadota</taxon>
        <taxon>Betaproteobacteria</taxon>
        <taxon>Neisseriales</taxon>
        <taxon>Neisseriaceae</taxon>
        <taxon>Neisseria</taxon>
    </lineage>
</organism>
<proteinExistence type="inferred from homology"/>
<sequence length="410" mass="44536">MGLKHFLEKIEPHFLPGGKHEKWYALYEAAATIFYTSGAVTRKAAHVRDALDSKRMMILVWLALFPAMFYGMYNVGAQAFGALTPDLLQQSIANDWHYALANALGINMSSEAGVLGKMLFGAIYFLPIYATVFIVGGFWEVLFATVRKHEINEGFFVTSILFALIVPPTLPLWQAALGISFGVVVAKEVFGGTGKNFMNPALAGRAFLFFAYPANLSGDAVWTAVDGYSGATALAQWAAHGADGLKNAITGQTITWMDAFIGKLPGSIGEVSTLALLIGGAFIVFARIASWRIIAGVMIGMIAMSSLFNFIGSDTNAMFAMPWYWHLVVGGFAIGMLFMATDPVSASFTNVGKWWYGALIGVMCVLIRVVNPAYPEGMMLAILFANLFAPIFDYFVAQANIKRRKARSNG</sequence>
<protein>
    <recommendedName>
        <fullName evidence="1">Na(+)-translocating NADH-quinone reductase subunit B</fullName>
        <shortName evidence="1">Na(+)-NQR subunit B</shortName>
        <shortName evidence="1">Na(+)-translocating NQR subunit B</shortName>
        <ecNumber evidence="1">7.2.1.1</ecNumber>
    </recommendedName>
    <alternativeName>
        <fullName evidence="1">NQR complex subunit B</fullName>
    </alternativeName>
    <alternativeName>
        <fullName evidence="1">NQR-1 subunit B</fullName>
    </alternativeName>
</protein>